<evidence type="ECO:0000255" key="1">
    <source>
        <dbReference type="HAMAP-Rule" id="MF_00443"/>
    </source>
</evidence>
<evidence type="ECO:0000256" key="2">
    <source>
        <dbReference type="SAM" id="MobiDB-lite"/>
    </source>
</evidence>
<gene>
    <name evidence="1" type="primary">thiG</name>
    <name type="ordered locus">Francci3_3076</name>
</gene>
<reference key="1">
    <citation type="journal article" date="2007" name="Genome Res.">
        <title>Genome characteristics of facultatively symbiotic Frankia sp. strains reflect host range and host plant biogeography.</title>
        <authorList>
            <person name="Normand P."/>
            <person name="Lapierre P."/>
            <person name="Tisa L.S."/>
            <person name="Gogarten J.P."/>
            <person name="Alloisio N."/>
            <person name="Bagnarol E."/>
            <person name="Bassi C.A."/>
            <person name="Berry A.M."/>
            <person name="Bickhart D.M."/>
            <person name="Choisne N."/>
            <person name="Couloux A."/>
            <person name="Cournoyer B."/>
            <person name="Cruveiller S."/>
            <person name="Daubin V."/>
            <person name="Demange N."/>
            <person name="Francino M.P."/>
            <person name="Goltsman E."/>
            <person name="Huang Y."/>
            <person name="Kopp O.R."/>
            <person name="Labarre L."/>
            <person name="Lapidus A."/>
            <person name="Lavire C."/>
            <person name="Marechal J."/>
            <person name="Martinez M."/>
            <person name="Mastronunzio J.E."/>
            <person name="Mullin B.C."/>
            <person name="Niemann J."/>
            <person name="Pujic P."/>
            <person name="Rawnsley T."/>
            <person name="Rouy Z."/>
            <person name="Schenowitz C."/>
            <person name="Sellstedt A."/>
            <person name="Tavares F."/>
            <person name="Tomkins J.P."/>
            <person name="Vallenet D."/>
            <person name="Valverde C."/>
            <person name="Wall L.G."/>
            <person name="Wang Y."/>
            <person name="Medigue C."/>
            <person name="Benson D.R."/>
        </authorList>
    </citation>
    <scope>NUCLEOTIDE SEQUENCE [LARGE SCALE GENOMIC DNA]</scope>
    <source>
        <strain>DSM 45818 / CECT 9043 / HFP020203 / CcI3</strain>
    </source>
</reference>
<protein>
    <recommendedName>
        <fullName evidence="1">Thiazole synthase</fullName>
        <ecNumber evidence="1">2.8.1.10</ecNumber>
    </recommendedName>
</protein>
<name>THIG_FRACC</name>
<accession>Q2J8F9</accession>
<comment type="function">
    <text evidence="1">Catalyzes the rearrangement of 1-deoxy-D-xylulose 5-phosphate (DXP) to produce the thiazole phosphate moiety of thiamine. Sulfur is provided by the thiocarboxylate moiety of the carrier protein ThiS. In vitro, sulfur can be provided by H(2)S.</text>
</comment>
<comment type="catalytic activity">
    <reaction evidence="1">
        <text>[ThiS sulfur-carrier protein]-C-terminal-Gly-aminoethanethioate + 2-iminoacetate + 1-deoxy-D-xylulose 5-phosphate = [ThiS sulfur-carrier protein]-C-terminal Gly-Gly + 2-[(2R,5Z)-2-carboxy-4-methylthiazol-5(2H)-ylidene]ethyl phosphate + 2 H2O + H(+)</text>
        <dbReference type="Rhea" id="RHEA:26297"/>
        <dbReference type="Rhea" id="RHEA-COMP:12909"/>
        <dbReference type="Rhea" id="RHEA-COMP:19908"/>
        <dbReference type="ChEBI" id="CHEBI:15377"/>
        <dbReference type="ChEBI" id="CHEBI:15378"/>
        <dbReference type="ChEBI" id="CHEBI:57792"/>
        <dbReference type="ChEBI" id="CHEBI:62899"/>
        <dbReference type="ChEBI" id="CHEBI:77846"/>
        <dbReference type="ChEBI" id="CHEBI:90778"/>
        <dbReference type="ChEBI" id="CHEBI:232372"/>
        <dbReference type="EC" id="2.8.1.10"/>
    </reaction>
</comment>
<comment type="pathway">
    <text evidence="1">Cofactor biosynthesis; thiamine diphosphate biosynthesis.</text>
</comment>
<comment type="subunit">
    <text evidence="1">Homotetramer. Forms heterodimers with either ThiH or ThiS.</text>
</comment>
<comment type="subcellular location">
    <subcellularLocation>
        <location evidence="1">Cytoplasm</location>
    </subcellularLocation>
</comment>
<comment type="similarity">
    <text evidence="1">Belongs to the ThiG family.</text>
</comment>
<feature type="chain" id="PRO_0000236340" description="Thiazole synthase">
    <location>
        <begin position="1"/>
        <end position="337"/>
    </location>
</feature>
<feature type="region of interest" description="Disordered" evidence="2">
    <location>
        <begin position="1"/>
        <end position="41"/>
    </location>
</feature>
<feature type="region of interest" description="Disordered" evidence="2">
    <location>
        <begin position="302"/>
        <end position="337"/>
    </location>
</feature>
<feature type="compositionally biased region" description="Low complexity" evidence="2">
    <location>
        <begin position="10"/>
        <end position="25"/>
    </location>
</feature>
<feature type="compositionally biased region" description="Gly residues" evidence="2">
    <location>
        <begin position="26"/>
        <end position="41"/>
    </location>
</feature>
<feature type="compositionally biased region" description="Low complexity" evidence="2">
    <location>
        <begin position="319"/>
        <end position="337"/>
    </location>
</feature>
<feature type="active site" description="Schiff-base intermediate with DXP" evidence="1">
    <location>
        <position position="144"/>
    </location>
</feature>
<feature type="binding site" evidence="1">
    <location>
        <position position="205"/>
    </location>
    <ligand>
        <name>1-deoxy-D-xylulose 5-phosphate</name>
        <dbReference type="ChEBI" id="CHEBI:57792"/>
    </ligand>
</feature>
<feature type="binding site" evidence="1">
    <location>
        <begin position="231"/>
        <end position="232"/>
    </location>
    <ligand>
        <name>1-deoxy-D-xylulose 5-phosphate</name>
        <dbReference type="ChEBI" id="CHEBI:57792"/>
    </ligand>
</feature>
<feature type="binding site" evidence="1">
    <location>
        <begin position="253"/>
        <end position="254"/>
    </location>
    <ligand>
        <name>1-deoxy-D-xylulose 5-phosphate</name>
        <dbReference type="ChEBI" id="CHEBI:57792"/>
    </ligand>
</feature>
<keyword id="KW-0963">Cytoplasm</keyword>
<keyword id="KW-1185">Reference proteome</keyword>
<keyword id="KW-0704">Schiff base</keyword>
<keyword id="KW-0784">Thiamine biosynthesis</keyword>
<keyword id="KW-0808">Transferase</keyword>
<proteinExistence type="inferred from homology"/>
<dbReference type="EC" id="2.8.1.10" evidence="1"/>
<dbReference type="EMBL" id="CP000249">
    <property type="protein sequence ID" value="ABD12433.1"/>
    <property type="molecule type" value="Genomic_DNA"/>
</dbReference>
<dbReference type="RefSeq" id="WP_011437461.1">
    <property type="nucleotide sequence ID" value="NC_007777.1"/>
</dbReference>
<dbReference type="SMR" id="Q2J8F9"/>
<dbReference type="STRING" id="106370.Francci3_3076"/>
<dbReference type="KEGG" id="fra:Francci3_3076"/>
<dbReference type="eggNOG" id="COG2022">
    <property type="taxonomic scope" value="Bacteria"/>
</dbReference>
<dbReference type="HOGENOM" id="CLU_062233_1_0_11"/>
<dbReference type="OrthoDB" id="9805935at2"/>
<dbReference type="PhylomeDB" id="Q2J8F9"/>
<dbReference type="UniPathway" id="UPA00060"/>
<dbReference type="Proteomes" id="UP000001937">
    <property type="component" value="Chromosome"/>
</dbReference>
<dbReference type="GO" id="GO:0005737">
    <property type="term" value="C:cytoplasm"/>
    <property type="evidence" value="ECO:0007669"/>
    <property type="project" value="UniProtKB-SubCell"/>
</dbReference>
<dbReference type="GO" id="GO:1990107">
    <property type="term" value="F:thiazole synthase activity"/>
    <property type="evidence" value="ECO:0007669"/>
    <property type="project" value="UniProtKB-EC"/>
</dbReference>
<dbReference type="GO" id="GO:0009229">
    <property type="term" value="P:thiamine diphosphate biosynthetic process"/>
    <property type="evidence" value="ECO:0007669"/>
    <property type="project" value="UniProtKB-UniRule"/>
</dbReference>
<dbReference type="CDD" id="cd04728">
    <property type="entry name" value="ThiG"/>
    <property type="match status" value="1"/>
</dbReference>
<dbReference type="Gene3D" id="3.20.20.70">
    <property type="entry name" value="Aldolase class I"/>
    <property type="match status" value="1"/>
</dbReference>
<dbReference type="HAMAP" id="MF_00443">
    <property type="entry name" value="ThiG"/>
    <property type="match status" value="1"/>
</dbReference>
<dbReference type="InterPro" id="IPR013785">
    <property type="entry name" value="Aldolase_TIM"/>
</dbReference>
<dbReference type="InterPro" id="IPR033983">
    <property type="entry name" value="Thiazole_synthase_ThiG"/>
</dbReference>
<dbReference type="InterPro" id="IPR008867">
    <property type="entry name" value="ThiG"/>
</dbReference>
<dbReference type="PANTHER" id="PTHR34266">
    <property type="entry name" value="THIAZOLE SYNTHASE"/>
    <property type="match status" value="1"/>
</dbReference>
<dbReference type="PANTHER" id="PTHR34266:SF2">
    <property type="entry name" value="THIAZOLE SYNTHASE"/>
    <property type="match status" value="1"/>
</dbReference>
<dbReference type="Pfam" id="PF05690">
    <property type="entry name" value="ThiG"/>
    <property type="match status" value="1"/>
</dbReference>
<dbReference type="SUPFAM" id="SSF110399">
    <property type="entry name" value="ThiG-like"/>
    <property type="match status" value="1"/>
</dbReference>
<sequence>MSQHPLRPAGSRPGDSPPDGSCPDGLAGGGSAVGGGGGGEAGPGAAGADDLVIAGRAYGSRLLIGTGKFASHRVMRDSLVASGATIVTVALRRVDIGRIGDGDVLDFIPPSMTLLPNTSGAVDAAEALRLARLGRAATGTGLVKLEVTPDPRTLAPDPLETLRAAELMVADGFTVLPYCSADPVLARRLEEVGCATVMPLGSWIGSNRGLRTRDAIEAIVASAGVPVVVDAGLGVPSDAAEAMEIGAAAVLVNTAIAVAADPARMARAFALATAAGRLGFLAGRGAAGPATVASASSPLTGFLGAHPSPASHPSPASPVPSVSRATSPAAVVGEASR</sequence>
<organism>
    <name type="scientific">Frankia casuarinae (strain DSM 45818 / CECT 9043 / HFP020203 / CcI3)</name>
    <dbReference type="NCBI Taxonomy" id="106370"/>
    <lineage>
        <taxon>Bacteria</taxon>
        <taxon>Bacillati</taxon>
        <taxon>Actinomycetota</taxon>
        <taxon>Actinomycetes</taxon>
        <taxon>Frankiales</taxon>
        <taxon>Frankiaceae</taxon>
        <taxon>Frankia</taxon>
    </lineage>
</organism>